<proteinExistence type="inferred from homology"/>
<keyword id="KW-0150">Chloroplast</keyword>
<keyword id="KW-0472">Membrane</keyword>
<keyword id="KW-0602">Photosynthesis</keyword>
<keyword id="KW-0603">Photosystem I</keyword>
<keyword id="KW-0934">Plastid</keyword>
<keyword id="KW-1185">Reference proteome</keyword>
<keyword id="KW-0793">Thylakoid</keyword>
<keyword id="KW-0812">Transmembrane</keyword>
<keyword id="KW-1133">Transmembrane helix</keyword>
<name>PSAI_TOBAC</name>
<dbReference type="EMBL" id="Z00044">
    <property type="protein sequence ID" value="CAA77416.1"/>
    <property type="molecule type" value="Genomic_DNA"/>
</dbReference>
<dbReference type="RefSeq" id="NP_054509.1">
    <property type="nucleotide sequence ID" value="NC_001879.2"/>
</dbReference>
<dbReference type="SMR" id="P12187"/>
<dbReference type="GeneID" id="800490"/>
<dbReference type="KEGG" id="nta:800490"/>
<dbReference type="OrthoDB" id="970998at2759"/>
<dbReference type="Proteomes" id="UP000084051">
    <property type="component" value="Unplaced"/>
</dbReference>
<dbReference type="GO" id="GO:0009535">
    <property type="term" value="C:chloroplast thylakoid membrane"/>
    <property type="evidence" value="ECO:0007669"/>
    <property type="project" value="UniProtKB-SubCell"/>
</dbReference>
<dbReference type="GO" id="GO:0009522">
    <property type="term" value="C:photosystem I"/>
    <property type="evidence" value="ECO:0007669"/>
    <property type="project" value="UniProtKB-KW"/>
</dbReference>
<dbReference type="GO" id="GO:0015979">
    <property type="term" value="P:photosynthesis"/>
    <property type="evidence" value="ECO:0007669"/>
    <property type="project" value="UniProtKB-UniRule"/>
</dbReference>
<dbReference type="HAMAP" id="MF_00431">
    <property type="entry name" value="PSI_PsaI"/>
    <property type="match status" value="1"/>
</dbReference>
<dbReference type="InterPro" id="IPR001302">
    <property type="entry name" value="PSI_PsaI"/>
</dbReference>
<dbReference type="InterPro" id="IPR036357">
    <property type="entry name" value="PSI_PsaI_sf"/>
</dbReference>
<dbReference type="NCBIfam" id="TIGR03052">
    <property type="entry name" value="PS_I_psaI"/>
    <property type="match status" value="1"/>
</dbReference>
<dbReference type="PANTHER" id="PTHR35775">
    <property type="match status" value="1"/>
</dbReference>
<dbReference type="PANTHER" id="PTHR35775:SF2">
    <property type="entry name" value="PHOTOSYSTEM I REACTION CENTER SUBUNIT VIII"/>
    <property type="match status" value="1"/>
</dbReference>
<dbReference type="Pfam" id="PF00796">
    <property type="entry name" value="PSI_8"/>
    <property type="match status" value="1"/>
</dbReference>
<dbReference type="SUPFAM" id="SSF81540">
    <property type="entry name" value="Subunit VIII of photosystem I reaction centre, PsaI"/>
    <property type="match status" value="1"/>
</dbReference>
<accession>P12187</accession>
<comment type="function">
    <text evidence="1">May help in the organization of the PsaL subunit.</text>
</comment>
<comment type="subcellular location">
    <subcellularLocation>
        <location evidence="1">Plastid</location>
        <location evidence="1">Chloroplast thylakoid membrane</location>
        <topology evidence="1">Single-pass membrane protein</topology>
    </subcellularLocation>
</comment>
<comment type="similarity">
    <text evidence="3">Belongs to the PsaI family.</text>
</comment>
<organism>
    <name type="scientific">Nicotiana tabacum</name>
    <name type="common">Common tobacco</name>
    <dbReference type="NCBI Taxonomy" id="4097"/>
    <lineage>
        <taxon>Eukaryota</taxon>
        <taxon>Viridiplantae</taxon>
        <taxon>Streptophyta</taxon>
        <taxon>Embryophyta</taxon>
        <taxon>Tracheophyta</taxon>
        <taxon>Spermatophyta</taxon>
        <taxon>Magnoliopsida</taxon>
        <taxon>eudicotyledons</taxon>
        <taxon>Gunneridae</taxon>
        <taxon>Pentapetalae</taxon>
        <taxon>asterids</taxon>
        <taxon>lamiids</taxon>
        <taxon>Solanales</taxon>
        <taxon>Solanaceae</taxon>
        <taxon>Nicotianoideae</taxon>
        <taxon>Nicotianeae</taxon>
        <taxon>Nicotiana</taxon>
    </lineage>
</organism>
<reference key="1">
    <citation type="journal article" date="1986" name="EMBO J.">
        <title>The complete nucleotide sequence of the tobacco chloroplast genome: its gene organization and expression.</title>
        <authorList>
            <person name="Shinozaki K."/>
            <person name="Ohme M."/>
            <person name="Tanaka M."/>
            <person name="Wakasugi T."/>
            <person name="Hayashida N."/>
            <person name="Matsubayashi T."/>
            <person name="Zaita N."/>
            <person name="Chunwongse J."/>
            <person name="Obokata J."/>
            <person name="Yamaguchi-Shinozaki K."/>
            <person name="Ohto C."/>
            <person name="Torazawa K."/>
            <person name="Meng B.-Y."/>
            <person name="Sugita M."/>
            <person name="Deno H."/>
            <person name="Kamogashira T."/>
            <person name="Yamada K."/>
            <person name="Kusuda J."/>
            <person name="Takaiwa F."/>
            <person name="Kato A."/>
            <person name="Tohdoh N."/>
            <person name="Shimada H."/>
            <person name="Sugiura M."/>
        </authorList>
    </citation>
    <scope>NUCLEOTIDE SEQUENCE [LARGE SCALE GENOMIC DNA]</scope>
    <source>
        <strain>cv. Bright Yellow 4</strain>
    </source>
</reference>
<gene>
    <name type="primary">psaI</name>
</gene>
<evidence type="ECO:0000250" key="1"/>
<evidence type="ECO:0000255" key="2"/>
<evidence type="ECO:0000305" key="3"/>
<feature type="chain" id="PRO_0000194679" description="Photosystem I reaction center subunit VIII">
    <location>
        <begin position="1"/>
        <end position="36"/>
    </location>
</feature>
<feature type="transmembrane region" description="Helical" evidence="2">
    <location>
        <begin position="10"/>
        <end position="30"/>
    </location>
</feature>
<geneLocation type="chloroplast"/>
<sequence length="36" mass="3937">MTNLNLPSIFVPLVGLVFPAIAMASLFLHVQKNKIV</sequence>
<protein>
    <recommendedName>
        <fullName>Photosystem I reaction center subunit VIII</fullName>
        <shortName>PSI-I</shortName>
    </recommendedName>
</protein>